<comment type="function">
    <text evidence="1">Transfers the gamma-phosphate of ATP to the 4'-position of a tetraacyldisaccharide 1-phosphate intermediate (termed DS-1-P) to form tetraacyldisaccharide 1,4'-bis-phosphate (lipid IVA).</text>
</comment>
<comment type="catalytic activity">
    <reaction evidence="1">
        <text>a lipid A disaccharide + ATP = a lipid IVA + ADP + H(+)</text>
        <dbReference type="Rhea" id="RHEA:67840"/>
        <dbReference type="ChEBI" id="CHEBI:15378"/>
        <dbReference type="ChEBI" id="CHEBI:30616"/>
        <dbReference type="ChEBI" id="CHEBI:176343"/>
        <dbReference type="ChEBI" id="CHEBI:176425"/>
        <dbReference type="ChEBI" id="CHEBI:456216"/>
        <dbReference type="EC" id="2.7.1.130"/>
    </reaction>
</comment>
<comment type="pathway">
    <text evidence="1">Glycolipid biosynthesis; lipid IV(A) biosynthesis; lipid IV(A) from (3R)-3-hydroxytetradecanoyl-[acyl-carrier-protein] and UDP-N-acetyl-alpha-D-glucosamine: step 6/6.</text>
</comment>
<comment type="similarity">
    <text evidence="1">Belongs to the LpxK family.</text>
</comment>
<dbReference type="EC" id="2.7.1.130" evidence="1"/>
<dbReference type="EMBL" id="CP000569">
    <property type="protein sequence ID" value="ABN74364.1"/>
    <property type="molecule type" value="Genomic_DNA"/>
</dbReference>
<dbReference type="RefSeq" id="WP_005608502.1">
    <property type="nucleotide sequence ID" value="NC_009053.1"/>
</dbReference>
<dbReference type="SMR" id="A3N1S8"/>
<dbReference type="STRING" id="416269.APL_1278"/>
<dbReference type="EnsemblBacteria" id="ABN74364">
    <property type="protein sequence ID" value="ABN74364"/>
    <property type="gene ID" value="APL_1278"/>
</dbReference>
<dbReference type="KEGG" id="apl:APL_1278"/>
<dbReference type="eggNOG" id="COG1663">
    <property type="taxonomic scope" value="Bacteria"/>
</dbReference>
<dbReference type="HOGENOM" id="CLU_038816_2_0_6"/>
<dbReference type="UniPathway" id="UPA00359">
    <property type="reaction ID" value="UER00482"/>
</dbReference>
<dbReference type="Proteomes" id="UP000001432">
    <property type="component" value="Chromosome"/>
</dbReference>
<dbReference type="GO" id="GO:0005886">
    <property type="term" value="C:plasma membrane"/>
    <property type="evidence" value="ECO:0007669"/>
    <property type="project" value="TreeGrafter"/>
</dbReference>
<dbReference type="GO" id="GO:0005524">
    <property type="term" value="F:ATP binding"/>
    <property type="evidence" value="ECO:0007669"/>
    <property type="project" value="UniProtKB-UniRule"/>
</dbReference>
<dbReference type="GO" id="GO:0009029">
    <property type="term" value="F:tetraacyldisaccharide 4'-kinase activity"/>
    <property type="evidence" value="ECO:0007669"/>
    <property type="project" value="UniProtKB-UniRule"/>
</dbReference>
<dbReference type="GO" id="GO:0009245">
    <property type="term" value="P:lipid A biosynthetic process"/>
    <property type="evidence" value="ECO:0007669"/>
    <property type="project" value="UniProtKB-UniRule"/>
</dbReference>
<dbReference type="GO" id="GO:0009244">
    <property type="term" value="P:lipopolysaccharide core region biosynthetic process"/>
    <property type="evidence" value="ECO:0007669"/>
    <property type="project" value="TreeGrafter"/>
</dbReference>
<dbReference type="HAMAP" id="MF_00409">
    <property type="entry name" value="LpxK"/>
    <property type="match status" value="1"/>
</dbReference>
<dbReference type="InterPro" id="IPR003758">
    <property type="entry name" value="LpxK"/>
</dbReference>
<dbReference type="InterPro" id="IPR027417">
    <property type="entry name" value="P-loop_NTPase"/>
</dbReference>
<dbReference type="NCBIfam" id="TIGR00682">
    <property type="entry name" value="lpxK"/>
    <property type="match status" value="1"/>
</dbReference>
<dbReference type="PANTHER" id="PTHR42724">
    <property type="entry name" value="TETRAACYLDISACCHARIDE 4'-KINASE"/>
    <property type="match status" value="1"/>
</dbReference>
<dbReference type="PANTHER" id="PTHR42724:SF1">
    <property type="entry name" value="TETRAACYLDISACCHARIDE 4'-KINASE, MITOCHONDRIAL-RELATED"/>
    <property type="match status" value="1"/>
</dbReference>
<dbReference type="Pfam" id="PF02606">
    <property type="entry name" value="LpxK"/>
    <property type="match status" value="1"/>
</dbReference>
<dbReference type="SUPFAM" id="SSF52540">
    <property type="entry name" value="P-loop containing nucleoside triphosphate hydrolases"/>
    <property type="match status" value="1"/>
</dbReference>
<organism>
    <name type="scientific">Actinobacillus pleuropneumoniae serotype 5b (strain L20)</name>
    <dbReference type="NCBI Taxonomy" id="416269"/>
    <lineage>
        <taxon>Bacteria</taxon>
        <taxon>Pseudomonadati</taxon>
        <taxon>Pseudomonadota</taxon>
        <taxon>Gammaproteobacteria</taxon>
        <taxon>Pasteurellales</taxon>
        <taxon>Pasteurellaceae</taxon>
        <taxon>Actinobacillus</taxon>
    </lineage>
</organism>
<protein>
    <recommendedName>
        <fullName evidence="1">Tetraacyldisaccharide 4'-kinase</fullName>
        <ecNumber evidence="1">2.7.1.130</ecNumber>
    </recommendedName>
    <alternativeName>
        <fullName evidence="1">Lipid A 4'-kinase</fullName>
    </alternativeName>
</protein>
<feature type="chain" id="PRO_1000072272" description="Tetraacyldisaccharide 4'-kinase">
    <location>
        <begin position="1"/>
        <end position="326"/>
    </location>
</feature>
<feature type="binding site" evidence="1">
    <location>
        <begin position="53"/>
        <end position="60"/>
    </location>
    <ligand>
        <name>ATP</name>
        <dbReference type="ChEBI" id="CHEBI:30616"/>
    </ligand>
</feature>
<keyword id="KW-0067">ATP-binding</keyword>
<keyword id="KW-0418">Kinase</keyword>
<keyword id="KW-0441">Lipid A biosynthesis</keyword>
<keyword id="KW-0444">Lipid biosynthesis</keyword>
<keyword id="KW-0443">Lipid metabolism</keyword>
<keyword id="KW-0547">Nucleotide-binding</keyword>
<keyword id="KW-1185">Reference proteome</keyword>
<keyword id="KW-0808">Transferase</keyword>
<evidence type="ECO:0000255" key="1">
    <source>
        <dbReference type="HAMAP-Rule" id="MF_00409"/>
    </source>
</evidence>
<proteinExistence type="inferred from homology"/>
<accession>A3N1S8</accession>
<reference key="1">
    <citation type="journal article" date="2008" name="J. Bacteriol.">
        <title>The complete genome sequence of Actinobacillus pleuropneumoniae L20 (serotype 5b).</title>
        <authorList>
            <person name="Foote S.J."/>
            <person name="Bosse J.T."/>
            <person name="Bouevitch A.B."/>
            <person name="Langford P.R."/>
            <person name="Young N.M."/>
            <person name="Nash J.H.E."/>
        </authorList>
    </citation>
    <scope>NUCLEOTIDE SEQUENCE [LARGE SCALE GENOMIC DNA]</scope>
    <source>
        <strain>L20</strain>
    </source>
</reference>
<gene>
    <name evidence="1" type="primary">lpxK</name>
    <name type="ordered locus">APL_1278</name>
</gene>
<sequence>MNIWQSTSIITWLLAPFSLLFWLVSQIRLFLFRKKILKSYRSPVPVLVVGNISVGGNGKTPVVVWLVEQLQQRGVKVGVISRGYGGKSKDFPQLVTNQSSAEMVGDEPVLIVQRTGVPLAISANRQQSIELLLNQFKLDLIVTDDGLQHYALQRDIEWVVVDGIRRFGNGFVLPAGGLRELPSRLQSVQAIICNGGKAQPNEHLMTLEPEFAVNLRTGEQKPITDFIGQECVAIAGIGHPPRFFNMLENLGVKLLKTQGFADHQAFEPAQLKALAAEQIPLLMTEKDAVKCRTFAQQNWWYVPVSAKFSPESTACLLEPILKRLGK</sequence>
<name>LPXK_ACTP2</name>